<accession>A1AA00</accession>
<keyword id="KW-0067">ATP-binding</keyword>
<keyword id="KW-0418">Kinase</keyword>
<keyword id="KW-0547">Nucleotide-binding</keyword>
<keyword id="KW-1185">Reference proteome</keyword>
<keyword id="KW-0808">Transferase</keyword>
<organism>
    <name type="scientific">Escherichia coli O1:K1 / APEC</name>
    <dbReference type="NCBI Taxonomy" id="405955"/>
    <lineage>
        <taxon>Bacteria</taxon>
        <taxon>Pseudomonadati</taxon>
        <taxon>Pseudomonadota</taxon>
        <taxon>Gammaproteobacteria</taxon>
        <taxon>Enterobacterales</taxon>
        <taxon>Enterobacteriaceae</taxon>
        <taxon>Escherichia</taxon>
    </lineage>
</organism>
<comment type="function">
    <text evidence="1">Catalyzes the ATP-dependent phosphorylation of thiamine to thiamine phosphate. Is involved in thiamine salvage.</text>
</comment>
<comment type="catalytic activity">
    <reaction evidence="1">
        <text>thiamine + ATP = thiamine phosphate + ADP + H(+)</text>
        <dbReference type="Rhea" id="RHEA:12012"/>
        <dbReference type="ChEBI" id="CHEBI:15378"/>
        <dbReference type="ChEBI" id="CHEBI:18385"/>
        <dbReference type="ChEBI" id="CHEBI:30616"/>
        <dbReference type="ChEBI" id="CHEBI:37575"/>
        <dbReference type="ChEBI" id="CHEBI:456216"/>
        <dbReference type="EC" id="2.7.1.89"/>
    </reaction>
    <physiologicalReaction direction="left-to-right" evidence="1">
        <dbReference type="Rhea" id="RHEA:12013"/>
    </physiologicalReaction>
</comment>
<comment type="pathway">
    <text evidence="1">Cofactor biosynthesis; thiamine diphosphate biosynthesis; thiamine phosphate from thiamine: step 1/1.</text>
</comment>
<comment type="similarity">
    <text evidence="1">Belongs to the thiamine kinase family.</text>
</comment>
<name>THIK_ECOK1</name>
<reference key="1">
    <citation type="journal article" date="2007" name="J. Bacteriol.">
        <title>The genome sequence of avian pathogenic Escherichia coli strain O1:K1:H7 shares strong similarities with human extraintestinal pathogenic E. coli genomes.</title>
        <authorList>
            <person name="Johnson T.J."/>
            <person name="Kariyawasam S."/>
            <person name="Wannemuehler Y."/>
            <person name="Mangiamele P."/>
            <person name="Johnson S.J."/>
            <person name="Doetkott C."/>
            <person name="Skyberg J.A."/>
            <person name="Lynne A.M."/>
            <person name="Johnson J.R."/>
            <person name="Nolan L.K."/>
        </authorList>
    </citation>
    <scope>NUCLEOTIDE SEQUENCE [LARGE SCALE GENOMIC DNA]</scope>
</reference>
<sequence>MPFRSNNPLTRDELLSRFFPQFHPVTTFNSGLSGGSFLIEHQGQRFVVRQPHDPDAPQSAFLRQYRALSQLPACIAPKPHLYLRDWMVVDYLPGEVKTYLPDTNELAGLLYYLHQQPRFGWRITLLPLLELYWQQSDPARRTVGWLRMLKRLRKAREPRLLRLSPLHMDVHAGNLVHSASGLKLIDWEYAGDGDIALELAAVWVENIDQHRQLVNDYATRAKIYPAQLWRQVRRWFPWLLMLKAGWFEYRWRQTGDQQFIRLADDTWRQLLIKQ</sequence>
<protein>
    <recommendedName>
        <fullName evidence="1">Thiamine kinase</fullName>
        <ecNumber evidence="1">2.7.1.89</ecNumber>
    </recommendedName>
</protein>
<gene>
    <name evidence="1" type="primary">thiK</name>
    <name type="ordered locus">Ecok1_09960</name>
    <name type="ORF">APECO1_187</name>
</gene>
<proteinExistence type="inferred from homology"/>
<feature type="chain" id="PRO_0000290996" description="Thiamine kinase">
    <location>
        <begin position="1"/>
        <end position="274"/>
    </location>
</feature>
<evidence type="ECO:0000255" key="1">
    <source>
        <dbReference type="HAMAP-Rule" id="MF_01604"/>
    </source>
</evidence>
<dbReference type="EC" id="2.7.1.89" evidence="1"/>
<dbReference type="EMBL" id="CP000468">
    <property type="protein sequence ID" value="ABJ00490.1"/>
    <property type="molecule type" value="Genomic_DNA"/>
</dbReference>
<dbReference type="RefSeq" id="WP_001116600.1">
    <property type="nucleotide sequence ID" value="NZ_CADILS010000019.1"/>
</dbReference>
<dbReference type="SMR" id="A1AA00"/>
<dbReference type="KEGG" id="ecv:APECO1_187"/>
<dbReference type="HOGENOM" id="CLU_055115_2_1_6"/>
<dbReference type="UniPathway" id="UPA00060">
    <property type="reaction ID" value="UER00596"/>
</dbReference>
<dbReference type="Proteomes" id="UP000008216">
    <property type="component" value="Chromosome"/>
</dbReference>
<dbReference type="GO" id="GO:0005524">
    <property type="term" value="F:ATP binding"/>
    <property type="evidence" value="ECO:0007669"/>
    <property type="project" value="UniProtKB-KW"/>
</dbReference>
<dbReference type="GO" id="GO:0019165">
    <property type="term" value="F:thiamine kinase activity"/>
    <property type="evidence" value="ECO:0007669"/>
    <property type="project" value="UniProtKB-UniRule"/>
</dbReference>
<dbReference type="GO" id="GO:0009229">
    <property type="term" value="P:thiamine diphosphate biosynthetic process"/>
    <property type="evidence" value="ECO:0007669"/>
    <property type="project" value="UniProtKB-UniRule"/>
</dbReference>
<dbReference type="GO" id="GO:0006772">
    <property type="term" value="P:thiamine metabolic process"/>
    <property type="evidence" value="ECO:0007669"/>
    <property type="project" value="InterPro"/>
</dbReference>
<dbReference type="FunFam" id="3.90.1200.10:FF:000004">
    <property type="entry name" value="Thiamine kinase"/>
    <property type="match status" value="1"/>
</dbReference>
<dbReference type="Gene3D" id="3.90.1200.10">
    <property type="match status" value="1"/>
</dbReference>
<dbReference type="HAMAP" id="MF_01604">
    <property type="entry name" value="Thiamine_kinase"/>
    <property type="match status" value="1"/>
</dbReference>
<dbReference type="InterPro" id="IPR002575">
    <property type="entry name" value="Aminoglycoside_PTrfase"/>
</dbReference>
<dbReference type="InterPro" id="IPR011009">
    <property type="entry name" value="Kinase-like_dom_sf"/>
</dbReference>
<dbReference type="InterPro" id="IPR014093">
    <property type="entry name" value="Thiamine_kinase"/>
</dbReference>
<dbReference type="NCBIfam" id="NF007620">
    <property type="entry name" value="PRK10271.1"/>
    <property type="match status" value="1"/>
</dbReference>
<dbReference type="NCBIfam" id="TIGR02721">
    <property type="entry name" value="ycfN_thiK"/>
    <property type="match status" value="1"/>
</dbReference>
<dbReference type="Pfam" id="PF01636">
    <property type="entry name" value="APH"/>
    <property type="match status" value="1"/>
</dbReference>
<dbReference type="SUPFAM" id="SSF56112">
    <property type="entry name" value="Protein kinase-like (PK-like)"/>
    <property type="match status" value="1"/>
</dbReference>